<name>UXAC_BRUSI</name>
<accession>A9WZA1</accession>
<gene>
    <name evidence="1" type="primary">uxaC</name>
    <name type="ordered locus">BSUIS_B0804</name>
</gene>
<dbReference type="EC" id="5.3.1.12" evidence="1"/>
<dbReference type="EMBL" id="CP000912">
    <property type="protein sequence ID" value="ABY39767.1"/>
    <property type="molecule type" value="Genomic_DNA"/>
</dbReference>
<dbReference type="RefSeq" id="WP_006073937.1">
    <property type="nucleotide sequence ID" value="NC_010167.1"/>
</dbReference>
<dbReference type="SMR" id="A9WZA1"/>
<dbReference type="KEGG" id="bmt:BSUIS_B0804"/>
<dbReference type="HOGENOM" id="CLU_044465_0_0_5"/>
<dbReference type="UniPathway" id="UPA00246"/>
<dbReference type="Proteomes" id="UP000008545">
    <property type="component" value="Chromosome II"/>
</dbReference>
<dbReference type="GO" id="GO:0008880">
    <property type="term" value="F:glucuronate isomerase activity"/>
    <property type="evidence" value="ECO:0007669"/>
    <property type="project" value="UniProtKB-UniRule"/>
</dbReference>
<dbReference type="GO" id="GO:0019698">
    <property type="term" value="P:D-galacturonate catabolic process"/>
    <property type="evidence" value="ECO:0007669"/>
    <property type="project" value="TreeGrafter"/>
</dbReference>
<dbReference type="GO" id="GO:0042840">
    <property type="term" value="P:D-glucuronate catabolic process"/>
    <property type="evidence" value="ECO:0007669"/>
    <property type="project" value="TreeGrafter"/>
</dbReference>
<dbReference type="Gene3D" id="3.20.20.140">
    <property type="entry name" value="Metal-dependent hydrolases"/>
    <property type="match status" value="1"/>
</dbReference>
<dbReference type="Gene3D" id="1.10.2020.10">
    <property type="entry name" value="uronate isomerase, domain 2, chain A"/>
    <property type="match status" value="1"/>
</dbReference>
<dbReference type="HAMAP" id="MF_00675">
    <property type="entry name" value="UxaC"/>
    <property type="match status" value="1"/>
</dbReference>
<dbReference type="InterPro" id="IPR032466">
    <property type="entry name" value="Metal_Hydrolase"/>
</dbReference>
<dbReference type="InterPro" id="IPR003766">
    <property type="entry name" value="Uronate_isomerase"/>
</dbReference>
<dbReference type="NCBIfam" id="NF002794">
    <property type="entry name" value="PRK02925.1"/>
    <property type="match status" value="1"/>
</dbReference>
<dbReference type="PANTHER" id="PTHR30068">
    <property type="entry name" value="URONATE ISOMERASE"/>
    <property type="match status" value="1"/>
</dbReference>
<dbReference type="PANTHER" id="PTHR30068:SF4">
    <property type="entry name" value="URONATE ISOMERASE"/>
    <property type="match status" value="1"/>
</dbReference>
<dbReference type="Pfam" id="PF02614">
    <property type="entry name" value="UxaC"/>
    <property type="match status" value="1"/>
</dbReference>
<dbReference type="SUPFAM" id="SSF51556">
    <property type="entry name" value="Metallo-dependent hydrolases"/>
    <property type="match status" value="1"/>
</dbReference>
<reference key="1">
    <citation type="submission" date="2007-12" db="EMBL/GenBank/DDBJ databases">
        <title>Brucella suis ATCC 23445 whole genome shotgun sequencing project.</title>
        <authorList>
            <person name="Setubal J.C."/>
            <person name="Bowns C."/>
            <person name="Boyle S."/>
            <person name="Crasta O.R."/>
            <person name="Czar M.J."/>
            <person name="Dharmanolla C."/>
            <person name="Gillespie J.J."/>
            <person name="Kenyon R.W."/>
            <person name="Lu J."/>
            <person name="Mane S."/>
            <person name="Mohapatra S."/>
            <person name="Nagrani S."/>
            <person name="Purkayastha A."/>
            <person name="Rajasimha H.K."/>
            <person name="Shallom J.M."/>
            <person name="Shallom S."/>
            <person name="Shukla M."/>
            <person name="Snyder E.E."/>
            <person name="Sobral B.W."/>
            <person name="Wattam A.R."/>
            <person name="Will R."/>
            <person name="Williams K."/>
            <person name="Yoo H."/>
            <person name="Bruce D."/>
            <person name="Detter C."/>
            <person name="Munk C."/>
            <person name="Brettin T.S."/>
        </authorList>
    </citation>
    <scope>NUCLEOTIDE SEQUENCE [LARGE SCALE GENOMIC DNA]</scope>
    <source>
        <strain>ATCC 23445 / NCTC 10510</strain>
    </source>
</reference>
<sequence>MALNPDRLFSAEPGTREIARRLFASVEKLPIISPHGHTEPIWYARNEAFPDPASLFVKPDHYITRMLYSQGHSLESLGIASRDGRPSETDARKIWRLFATNWYLFRATPSRLWFEHAMETVFGITERLSQENADRIFDAIADQLTQPHMRPRALYDRFNIEAISTTDAATDPLIYHDEVIASGWHGRIIPAYRPDAAVDAGRPDFASEVEKLVGVAGTPLTWQGYLDAHRNRREYFKRRGATSSDHGHPTAQTADLSAGDASRLFDRVIKGNASTSDAEMFRAQMLTEMARMSIDDGLVMQIHPGSFRNHNPTVFERFGLDKGADIPRQTGFVDQLKPLLDGFGNDPRLTVILFTLDETAYSRELAPLAGDYPALKLGPAWWFFDSPEGILRYRKLTTETAGFYNTVGFNDDTRAYLSIPARHDMARRVDCAYLAGLVADHRLEEDEAYEVAHDLAYRLAKQTYKL</sequence>
<organism>
    <name type="scientific">Brucella suis (strain ATCC 23445 / NCTC 10510)</name>
    <dbReference type="NCBI Taxonomy" id="470137"/>
    <lineage>
        <taxon>Bacteria</taxon>
        <taxon>Pseudomonadati</taxon>
        <taxon>Pseudomonadota</taxon>
        <taxon>Alphaproteobacteria</taxon>
        <taxon>Hyphomicrobiales</taxon>
        <taxon>Brucellaceae</taxon>
        <taxon>Brucella/Ochrobactrum group</taxon>
        <taxon>Brucella</taxon>
    </lineage>
</organism>
<feature type="chain" id="PRO_1000082959" description="Uronate isomerase">
    <location>
        <begin position="1"/>
        <end position="466"/>
    </location>
</feature>
<protein>
    <recommendedName>
        <fullName evidence="1">Uronate isomerase</fullName>
        <ecNumber evidence="1">5.3.1.12</ecNumber>
    </recommendedName>
    <alternativeName>
        <fullName evidence="1">Glucuronate isomerase</fullName>
    </alternativeName>
    <alternativeName>
        <fullName evidence="1">Uronic isomerase</fullName>
    </alternativeName>
</protein>
<keyword id="KW-0413">Isomerase</keyword>
<evidence type="ECO:0000255" key="1">
    <source>
        <dbReference type="HAMAP-Rule" id="MF_00675"/>
    </source>
</evidence>
<comment type="catalytic activity">
    <reaction evidence="1">
        <text>D-glucuronate = D-fructuronate</text>
        <dbReference type="Rhea" id="RHEA:13049"/>
        <dbReference type="ChEBI" id="CHEBI:58720"/>
        <dbReference type="ChEBI" id="CHEBI:59863"/>
        <dbReference type="EC" id="5.3.1.12"/>
    </reaction>
</comment>
<comment type="catalytic activity">
    <reaction evidence="1">
        <text>aldehydo-D-galacturonate = keto-D-tagaturonate</text>
        <dbReference type="Rhea" id="RHEA:27702"/>
        <dbReference type="ChEBI" id="CHEBI:12952"/>
        <dbReference type="ChEBI" id="CHEBI:17886"/>
        <dbReference type="EC" id="5.3.1.12"/>
    </reaction>
</comment>
<comment type="pathway">
    <text evidence="1">Carbohydrate metabolism; pentose and glucuronate interconversion.</text>
</comment>
<comment type="similarity">
    <text evidence="1">Belongs to the metallo-dependent hydrolases superfamily. Uronate isomerase family.</text>
</comment>
<proteinExistence type="inferred from homology"/>